<reference key="1">
    <citation type="journal article" date="2005" name="J. Bacteriol.">
        <title>Insights on evolution of virulence and resistance from the complete genome analysis of an early methicillin-resistant Staphylococcus aureus strain and a biofilm-producing methicillin-resistant Staphylococcus epidermidis strain.</title>
        <authorList>
            <person name="Gill S.R."/>
            <person name="Fouts D.E."/>
            <person name="Archer G.L."/>
            <person name="Mongodin E.F."/>
            <person name="DeBoy R.T."/>
            <person name="Ravel J."/>
            <person name="Paulsen I.T."/>
            <person name="Kolonay J.F."/>
            <person name="Brinkac L.M."/>
            <person name="Beanan M.J."/>
            <person name="Dodson R.J."/>
            <person name="Daugherty S.C."/>
            <person name="Madupu R."/>
            <person name="Angiuoli S.V."/>
            <person name="Durkin A.S."/>
            <person name="Haft D.H."/>
            <person name="Vamathevan J.J."/>
            <person name="Khouri H."/>
            <person name="Utterback T.R."/>
            <person name="Lee C."/>
            <person name="Dimitrov G."/>
            <person name="Jiang L."/>
            <person name="Qin H."/>
            <person name="Weidman J."/>
            <person name="Tran K."/>
            <person name="Kang K.H."/>
            <person name="Hance I.R."/>
            <person name="Nelson K.E."/>
            <person name="Fraser C.M."/>
        </authorList>
    </citation>
    <scope>NUCLEOTIDE SEQUENCE [LARGE SCALE GENOMIC DNA]</scope>
    <source>
        <strain>COL</strain>
    </source>
</reference>
<name>RS19_STAAC</name>
<dbReference type="EMBL" id="CP000046">
    <property type="protein sequence ID" value="AAW37110.1"/>
    <property type="molecule type" value="Genomic_DNA"/>
</dbReference>
<dbReference type="RefSeq" id="WP_000124353.1">
    <property type="nucleotide sequence ID" value="NZ_JBGOFO010000004.1"/>
</dbReference>
<dbReference type="SMR" id="Q5HDW2"/>
<dbReference type="GeneID" id="98346558"/>
<dbReference type="KEGG" id="sac:SACOL2235"/>
<dbReference type="HOGENOM" id="CLU_144911_0_1_9"/>
<dbReference type="Proteomes" id="UP000000530">
    <property type="component" value="Chromosome"/>
</dbReference>
<dbReference type="GO" id="GO:0005737">
    <property type="term" value="C:cytoplasm"/>
    <property type="evidence" value="ECO:0007669"/>
    <property type="project" value="UniProtKB-ARBA"/>
</dbReference>
<dbReference type="GO" id="GO:0015935">
    <property type="term" value="C:small ribosomal subunit"/>
    <property type="evidence" value="ECO:0007669"/>
    <property type="project" value="InterPro"/>
</dbReference>
<dbReference type="GO" id="GO:0019843">
    <property type="term" value="F:rRNA binding"/>
    <property type="evidence" value="ECO:0007669"/>
    <property type="project" value="UniProtKB-UniRule"/>
</dbReference>
<dbReference type="GO" id="GO:0003735">
    <property type="term" value="F:structural constituent of ribosome"/>
    <property type="evidence" value="ECO:0007669"/>
    <property type="project" value="InterPro"/>
</dbReference>
<dbReference type="GO" id="GO:0000028">
    <property type="term" value="P:ribosomal small subunit assembly"/>
    <property type="evidence" value="ECO:0007669"/>
    <property type="project" value="TreeGrafter"/>
</dbReference>
<dbReference type="GO" id="GO:0006412">
    <property type="term" value="P:translation"/>
    <property type="evidence" value="ECO:0007669"/>
    <property type="project" value="UniProtKB-UniRule"/>
</dbReference>
<dbReference type="FunFam" id="3.30.860.10:FF:000001">
    <property type="entry name" value="30S ribosomal protein S19"/>
    <property type="match status" value="1"/>
</dbReference>
<dbReference type="Gene3D" id="3.30.860.10">
    <property type="entry name" value="30s Ribosomal Protein S19, Chain A"/>
    <property type="match status" value="1"/>
</dbReference>
<dbReference type="HAMAP" id="MF_00531">
    <property type="entry name" value="Ribosomal_uS19"/>
    <property type="match status" value="1"/>
</dbReference>
<dbReference type="InterPro" id="IPR002222">
    <property type="entry name" value="Ribosomal_uS19"/>
</dbReference>
<dbReference type="InterPro" id="IPR005732">
    <property type="entry name" value="Ribosomal_uS19_bac-type"/>
</dbReference>
<dbReference type="InterPro" id="IPR020934">
    <property type="entry name" value="Ribosomal_uS19_CS"/>
</dbReference>
<dbReference type="InterPro" id="IPR023575">
    <property type="entry name" value="Ribosomal_uS19_SF"/>
</dbReference>
<dbReference type="NCBIfam" id="TIGR01050">
    <property type="entry name" value="rpsS_bact"/>
    <property type="match status" value="1"/>
</dbReference>
<dbReference type="PANTHER" id="PTHR11880">
    <property type="entry name" value="RIBOSOMAL PROTEIN S19P FAMILY MEMBER"/>
    <property type="match status" value="1"/>
</dbReference>
<dbReference type="PANTHER" id="PTHR11880:SF8">
    <property type="entry name" value="SMALL RIBOSOMAL SUBUNIT PROTEIN US19M"/>
    <property type="match status" value="1"/>
</dbReference>
<dbReference type="Pfam" id="PF00203">
    <property type="entry name" value="Ribosomal_S19"/>
    <property type="match status" value="1"/>
</dbReference>
<dbReference type="PIRSF" id="PIRSF002144">
    <property type="entry name" value="Ribosomal_S19"/>
    <property type="match status" value="1"/>
</dbReference>
<dbReference type="PRINTS" id="PR00975">
    <property type="entry name" value="RIBOSOMALS19"/>
</dbReference>
<dbReference type="SUPFAM" id="SSF54570">
    <property type="entry name" value="Ribosomal protein S19"/>
    <property type="match status" value="1"/>
</dbReference>
<dbReference type="PROSITE" id="PS00323">
    <property type="entry name" value="RIBOSOMAL_S19"/>
    <property type="match status" value="1"/>
</dbReference>
<protein>
    <recommendedName>
        <fullName evidence="1">Small ribosomal subunit protein uS19</fullName>
    </recommendedName>
    <alternativeName>
        <fullName evidence="2">30S ribosomal protein S19</fullName>
    </alternativeName>
</protein>
<evidence type="ECO:0000255" key="1">
    <source>
        <dbReference type="HAMAP-Rule" id="MF_00531"/>
    </source>
</evidence>
<evidence type="ECO:0000305" key="2"/>
<keyword id="KW-0687">Ribonucleoprotein</keyword>
<keyword id="KW-0689">Ribosomal protein</keyword>
<keyword id="KW-0694">RNA-binding</keyword>
<keyword id="KW-0699">rRNA-binding</keyword>
<sequence length="92" mass="10615">MARSIKKGPFVDEHLMKKVEAQEGSEKKQVIKTWSRRSTIFPNFIGHTFAVYDGRKHVPVYVTEDMVGHKLGEFAPTRTFKGHVADDKKTRR</sequence>
<organism>
    <name type="scientific">Staphylococcus aureus (strain COL)</name>
    <dbReference type="NCBI Taxonomy" id="93062"/>
    <lineage>
        <taxon>Bacteria</taxon>
        <taxon>Bacillati</taxon>
        <taxon>Bacillota</taxon>
        <taxon>Bacilli</taxon>
        <taxon>Bacillales</taxon>
        <taxon>Staphylococcaceae</taxon>
        <taxon>Staphylococcus</taxon>
    </lineage>
</organism>
<gene>
    <name evidence="1" type="primary">rpsS</name>
    <name type="ordered locus">SACOL2235</name>
</gene>
<feature type="chain" id="PRO_0000129899" description="Small ribosomal subunit protein uS19">
    <location>
        <begin position="1"/>
        <end position="92"/>
    </location>
</feature>
<proteinExistence type="inferred from homology"/>
<comment type="function">
    <text evidence="1">Protein S19 forms a complex with S13 that binds strongly to the 16S ribosomal RNA.</text>
</comment>
<comment type="similarity">
    <text evidence="1">Belongs to the universal ribosomal protein uS19 family.</text>
</comment>
<accession>Q5HDW2</accession>